<feature type="signal peptide" evidence="2">
    <location>
        <begin position="1"/>
        <end position="23"/>
    </location>
</feature>
<feature type="chain" id="PRO_0000013226" description="Sonic hedgehog protein">
    <location>
        <begin position="24"/>
        <end position="418"/>
    </location>
</feature>
<feature type="chain" id="PRO_0000013227" description="Sonic hedgehog protein A N-product">
    <location>
        <begin position="24"/>
        <end position="197"/>
    </location>
</feature>
<feature type="short sequence motif" description="Cardin-Weintraub" evidence="3">
    <location>
        <begin position="32"/>
        <end position="38"/>
    </location>
</feature>
<feature type="binding site" evidence="2">
    <location>
        <position position="89"/>
    </location>
    <ligand>
        <name>Ca(2+)</name>
        <dbReference type="ChEBI" id="CHEBI:29108"/>
        <label>1</label>
    </ligand>
</feature>
<feature type="binding site" evidence="2">
    <location>
        <position position="90"/>
    </location>
    <ligand>
        <name>Ca(2+)</name>
        <dbReference type="ChEBI" id="CHEBI:29108"/>
        <label>1</label>
    </ligand>
</feature>
<feature type="binding site" evidence="2">
    <location>
        <position position="90"/>
    </location>
    <ligand>
        <name>Ca(2+)</name>
        <dbReference type="ChEBI" id="CHEBI:29108"/>
        <label>2</label>
    </ligand>
</feature>
<feature type="binding site" evidence="2">
    <location>
        <position position="95"/>
    </location>
    <ligand>
        <name>Ca(2+)</name>
        <dbReference type="ChEBI" id="CHEBI:29108"/>
        <label>1</label>
    </ligand>
</feature>
<feature type="binding site" evidence="2">
    <location>
        <position position="125"/>
    </location>
    <ligand>
        <name>Ca(2+)</name>
        <dbReference type="ChEBI" id="CHEBI:29108"/>
        <label>1</label>
    </ligand>
</feature>
<feature type="binding site" evidence="2">
    <location>
        <position position="126"/>
    </location>
    <ligand>
        <name>Ca(2+)</name>
        <dbReference type="ChEBI" id="CHEBI:29108"/>
        <label>1</label>
    </ligand>
</feature>
<feature type="binding site" evidence="2">
    <location>
        <position position="126"/>
    </location>
    <ligand>
        <name>Ca(2+)</name>
        <dbReference type="ChEBI" id="CHEBI:29108"/>
        <label>2</label>
    </ligand>
</feature>
<feature type="binding site" evidence="2">
    <location>
        <position position="129"/>
    </location>
    <ligand>
        <name>Ca(2+)</name>
        <dbReference type="ChEBI" id="CHEBI:29108"/>
        <label>2</label>
    </ligand>
</feature>
<feature type="binding site" evidence="2">
    <location>
        <position position="131"/>
    </location>
    <ligand>
        <name>Ca(2+)</name>
        <dbReference type="ChEBI" id="CHEBI:29108"/>
        <label>2</label>
    </ligand>
</feature>
<feature type="binding site" evidence="2">
    <location>
        <position position="140"/>
    </location>
    <ligand>
        <name>Zn(2+)</name>
        <dbReference type="ChEBI" id="CHEBI:29105"/>
    </ligand>
</feature>
<feature type="binding site" evidence="2">
    <location>
        <position position="147"/>
    </location>
    <ligand>
        <name>Zn(2+)</name>
        <dbReference type="ChEBI" id="CHEBI:29105"/>
    </ligand>
</feature>
<feature type="binding site" evidence="2">
    <location>
        <position position="182"/>
    </location>
    <ligand>
        <name>Zn(2+)</name>
        <dbReference type="ChEBI" id="CHEBI:29105"/>
    </ligand>
</feature>
<feature type="site" description="Cleavage; by autolysis">
    <location>
        <begin position="197"/>
        <end position="198"/>
    </location>
</feature>
<feature type="site" description="Involved in cholesterol transfer" evidence="1">
    <location>
        <position position="243"/>
    </location>
</feature>
<feature type="site" description="Involved in auto-cleavage" evidence="1">
    <location>
        <position position="267"/>
    </location>
</feature>
<feature type="site" description="Essential for auto-cleavage" evidence="1">
    <location>
        <position position="270"/>
    </location>
</feature>
<feature type="lipid moiety-binding region" description="N-palmitoyl cysteine" evidence="1">
    <location>
        <position position="24"/>
    </location>
</feature>
<feature type="lipid moiety-binding region" description="Cholesterol glycine ester" evidence="1">
    <location>
        <position position="197"/>
    </location>
</feature>
<organism>
    <name type="scientific">Danio rerio</name>
    <name type="common">Zebrafish</name>
    <name type="synonym">Brachydanio rerio</name>
    <dbReference type="NCBI Taxonomy" id="7955"/>
    <lineage>
        <taxon>Eukaryota</taxon>
        <taxon>Metazoa</taxon>
        <taxon>Chordata</taxon>
        <taxon>Craniata</taxon>
        <taxon>Vertebrata</taxon>
        <taxon>Euteleostomi</taxon>
        <taxon>Actinopterygii</taxon>
        <taxon>Neopterygii</taxon>
        <taxon>Teleostei</taxon>
        <taxon>Ostariophysi</taxon>
        <taxon>Cypriniformes</taxon>
        <taxon>Danionidae</taxon>
        <taxon>Danioninae</taxon>
        <taxon>Danio</taxon>
    </lineage>
</organism>
<comment type="function">
    <molecule>Sonic hedgehog protein</molecule>
    <text evidence="2 3 4">The C-terminal part of the sonic hedgehog protein precursor displays an autoproteolysis and a cholesterol transferase activity (By similarity). Both activities result in the cleavage of the full-length protein into two parts (ShhN and ShhC) followed by the covalent attachment of a cholesterol moiety to the C-terminal of the newly generated ShhN (By similarity). Both activities occur in the endoplasmic reticulum (By similarity). Once cleaved, ShhC is degraded in the endoplasmic reticulum (By similarity).</text>
</comment>
<comment type="function">
    <molecule>Sonic hedgehog protein A N-product</molecule>
    <text evidence="2 3 4">The dually lipidated sonic hedgehog protein N-product (ShhNp) is a morphogen which is essential for a variety of patterning events during development (By similarity). Involved in dorso-ventral patterning of the brain and in early patterning of the developing eyes (PubMed:7583153). Binds to the patched (PTCH1) receptor, which functions in association with smoothened (SMO), to activate the transcription of target genes (By similarity). In the absence of SHH, PTCH1 represses the constitutive signaling activity of SMO (By similarity).</text>
</comment>
<comment type="catalytic activity">
    <molecule>Sonic hedgehog protein</molecule>
    <reaction evidence="3">
        <text>glycyl-L-cysteinyl-[protein] + cholesterol + H(+) = [protein]-C-terminal glycyl cholesterol ester + N-terminal L-cysteinyl-[protein]</text>
        <dbReference type="Rhea" id="RHEA:59504"/>
        <dbReference type="Rhea" id="RHEA-COMP:12707"/>
        <dbReference type="Rhea" id="RHEA-COMP:15369"/>
        <dbReference type="Rhea" id="RHEA-COMP:15374"/>
        <dbReference type="ChEBI" id="CHEBI:15378"/>
        <dbReference type="ChEBI" id="CHEBI:16113"/>
        <dbReference type="ChEBI" id="CHEBI:65250"/>
        <dbReference type="ChEBI" id="CHEBI:143135"/>
        <dbReference type="ChEBI" id="CHEBI:143140"/>
    </reaction>
    <physiologicalReaction direction="left-to-right" evidence="3">
        <dbReference type="Rhea" id="RHEA:59505"/>
    </physiologicalReaction>
</comment>
<comment type="subunit">
    <text evidence="2 3">Interacts with HHATL/GUP1 which negatively regulates HHAT-mediated palmitoylation of the SHH N-terminus (By similarity). Interacts with BOC and CDON (By similarity). Interacts with HHIP (By similarity). Interacts with DISP1 via its cholesterol anchor (By similarity). Interacts with SCUBE2 (By similarity).</text>
</comment>
<comment type="subunit">
    <molecule>Sonic hedgehog protein A N-product</molecule>
    <text evidence="2">Multimer.</text>
</comment>
<comment type="subcellular location">
    <molecule>Sonic hedgehog protein</molecule>
    <subcellularLocation>
        <location evidence="2">Endoplasmic reticulum membrane</location>
    </subcellularLocation>
    <subcellularLocation>
        <location evidence="2">Golgi apparatus membrane</location>
    </subcellularLocation>
    <text evidence="2">Co-localizes with HHAT in the ER and Golgi membrane.</text>
</comment>
<comment type="subcellular location">
    <molecule>Sonic hedgehog protein A N-product</molecule>
    <subcellularLocation>
        <location evidence="3">Cell membrane</location>
        <topology evidence="3">Lipid-anchor</topology>
    </subcellularLocation>
    <text evidence="3">The dual-lipidated sonic hedgehog protein N-product (ShhNp) is firmly tethered to the cell membrane where it forms multimers (By similarity). Further solubilization and release from the cell surface seem to be achieved through different mechanisms, including the interaction with DISP1 and SCUBE2, movement by lipoprotein particles, transport by cellular extensions called cytonemes or by the proteolytic removal of both terminal lipidated peptides.</text>
</comment>
<comment type="tissue specificity">
    <text>Expressed in the ventral midline of the neural tube and brain. Also found in the notochord and in developing fin bud. In the developing brain, expression occurs in domains that include a discrete region in the floor of the diencephalon.</text>
</comment>
<comment type="developmental stage">
    <text>First detectable in the inner cell layer of the embryonic shield during gastrulation. By 9.5 hours of development, expressed in a continuous band that extends from the tail to the head, the anterior boundary of expression being positioned in the center of the animal pole anterior to the presumptive midbrain.</text>
</comment>
<comment type="domain">
    <molecule>Sonic hedgehog protein A N-product</molecule>
    <text evidence="3">Binds calcium and zinc ions; this stabilizes the protein fold and is essential for protein-protein interactions mediated by this domain.</text>
</comment>
<comment type="domain">
    <molecule>Sonic hedgehog protein A N-product</molecule>
    <text evidence="3">The Cardin-Weintraub (CW) motif is required for heparan sulfate binding of the solubilized ShhNp (By similarity). The N-terminal palmitoylated peptide is cleaved at the Heparan sulfate-binding Cardin-Weintraub (CW) motif site (By similarity). The cleavage reduced the interactions with heparan sulfate. The cleavage is enhanced by SCUBE2 (By similarity).</text>
</comment>
<comment type="PTM">
    <molecule>Sonic hedgehog protein</molecule>
    <text evidence="3 4">The C-terminal domain displays an autoproteolysis activity and a cholesterol transferase activity (By similarity). Both activities result in the cleavage of the full-length protein and covalent attachment of a cholesterol moiety to the C-terminal of the newly generated N-terminal fragment (ShhN) (By similarity). Cholesterylation is required for the sonic hedgehog protein N-product targeting to lipid rafts and multimerization (By similarity). ShhN is the active species in both local and long-range signaling, whereas the C-product (ShhC) is degraded in the reticulum endoplasmic (By similarity).</text>
</comment>
<comment type="PTM">
    <molecule>Sonic hedgehog protein A N-product</molecule>
    <text evidence="3">N-palmitoylation by HHAT of ShhN is required for sonic hedgehog protein N-product multimerization and full activity (By similarity). It is a prerequisite for the membrane-proximal positioning and the subsequent shedding of this N-terminal peptide (By similarity).</text>
</comment>
<comment type="PTM">
    <molecule>Sonic hedgehog protein A N-product</molecule>
    <text evidence="3">The lipidated N- and C-terminal peptides of ShhNp can be cleaved (shedding) (By similarity). The N-terminal palmitoylated peptide is cleaved at the Cardin-Weintraub (CW) motif site (By similarity). The cleavage reduced the interactions with heparan sulfate (By similarity). The cleavage is enhanced by SCUBE2 (By similarity).</text>
</comment>
<comment type="similarity">
    <text evidence="5">Belongs to the hedgehog family.</text>
</comment>
<comment type="caution">
    <text evidence="3">The several steps and mechanisms that permit controlled Shh dispersion and gradient formation remain controversial. The Shh C-terminal domain displays an autoproteolysis activity and a cholesterol transferase activity resulting in the cleavage and covalent attachment of a cholesterol moiety to the C-terminal of the newly generated N-terminal fragment (ShhN). The protein is further modified by covalent addition of palmitate at the N-terminal of ShhN, resulting to the dual-lipidated Shh (ShhNp). ShhNp is firmly tethered to the cell membrane where it forms multimers. Further solubilization and release from the cell surface seem to be achieved through different mechanisms, including the interaction with DISP1 and SCUBE2, movement by lipoprotein particles, transport by cellular extensions called cytonemes or by proteolytic removal of both terminal lipidated peptides. Once released, the fully processed Shh can signal within embryonic tissues both at short and long-range.</text>
</comment>
<proteinExistence type="evidence at protein level"/>
<protein>
    <recommendedName>
        <fullName evidence="5">Sonic hedgehog protein</fullName>
        <shortName>SHHA</shortName>
        <ecNumber evidence="3">3.1.-.-</ecNumber>
    </recommendedName>
    <alternativeName>
        <fullName evidence="3">Shh unprocessed N-terminal signaling and C-terminal autoprocessing domains</fullName>
        <shortName evidence="3">ShhNC</shortName>
    </alternativeName>
    <alternativeName>
        <fullName>VHH-1</fullName>
    </alternativeName>
    <component>
        <recommendedName>
            <fullName>Sonic hedgehog protein A N-product</fullName>
        </recommendedName>
        <alternativeName>
            <fullName evidence="3">Shh N-terminal processed signaling domains</fullName>
            <shortName evidence="3">ShhNp</shortName>
        </alternativeName>
        <alternativeName>
            <fullName>Sonic hedgehog protein N-product</fullName>
            <shortName>ShhN</shortName>
        </alternativeName>
    </component>
</protein>
<keyword id="KW-0068">Autocatalytic cleavage</keyword>
<keyword id="KW-0106">Calcium</keyword>
<keyword id="KW-1003">Cell membrane</keyword>
<keyword id="KW-0217">Developmental protein</keyword>
<keyword id="KW-0256">Endoplasmic reticulum</keyword>
<keyword id="KW-0333">Golgi apparatus</keyword>
<keyword id="KW-0378">Hydrolase</keyword>
<keyword id="KW-0449">Lipoprotein</keyword>
<keyword id="KW-0472">Membrane</keyword>
<keyword id="KW-0479">Metal-binding</keyword>
<keyword id="KW-0564">Palmitate</keyword>
<keyword id="KW-0645">Protease</keyword>
<keyword id="KW-1185">Reference proteome</keyword>
<keyword id="KW-0732">Signal</keyword>
<keyword id="KW-0808">Transferase</keyword>
<keyword id="KW-0862">Zinc</keyword>
<name>SHH_DANRE</name>
<sequence length="418" mass="46403">MRLLTRVLLVSLLTLSLVVSGLACGPGRGYGRRRHPKKLTPLAYKQFIPNVAEKTLGASGRYEGKITRNSERFKELTPNYNPDIIFKDEENTGADRLMTQRCKDKLNSLAISVMNHWPGVKLRVTEGWDEDGHHFEESLHYEGRAVDITTSDRDKSKYGTLSRLAVEAGFDWVYYESKAHIHCSVKAENSVAAKSGGCFPGSALVSLQDGGQKAVKDLNPGDKVLAADSAGNLVFSDFIMFTDRDSTTRRVFYVIETQEPVEKITLTAAHLLFVLDNSTEDLHTMTAAYASSVRAGQKVMVVDDSGQLKSVIVQRIYTEEQRGSFAPVTAHGTIVVDRILASCYAVIEDQGLAHLAFAPARLYYYVSSFLFPQNSSSRSNATLQQEGVHWYSRLLYQMGTWLLDSNMLHPLGMSVNSS</sequence>
<gene>
    <name type="primary">shha</name>
    <name type="synonym">shh</name>
    <name type="synonym">vhh1</name>
</gene>
<evidence type="ECO:0000250" key="1"/>
<evidence type="ECO:0000250" key="2">
    <source>
        <dbReference type="UniProtKB" id="Q15465"/>
    </source>
</evidence>
<evidence type="ECO:0000250" key="3">
    <source>
        <dbReference type="UniProtKB" id="Q62226"/>
    </source>
</evidence>
<evidence type="ECO:0000269" key="4">
    <source>
    </source>
</evidence>
<evidence type="ECO:0000305" key="5"/>
<dbReference type="EC" id="3.1.-.-" evidence="3"/>
<dbReference type="EMBL" id="L27585">
    <property type="protein sequence ID" value="AAA20998.1"/>
    <property type="molecule type" value="mRNA"/>
</dbReference>
<dbReference type="EMBL" id="U30711">
    <property type="protein sequence ID" value="AAC59742.1"/>
    <property type="molecule type" value="mRNA"/>
</dbReference>
<dbReference type="EMBL" id="Z35669">
    <property type="protein sequence ID" value="CAA84738.1"/>
    <property type="molecule type" value="mRNA"/>
</dbReference>
<dbReference type="EMBL" id="AF124382">
    <property type="protein sequence ID" value="AAD47913.1"/>
    <property type="molecule type" value="Genomic_DNA"/>
</dbReference>
<dbReference type="EMBL" id="U51339">
    <property type="protein sequence ID" value="AAB38570.1"/>
    <property type="molecule type" value="Genomic_DNA"/>
</dbReference>
<dbReference type="EMBL" id="U51351">
    <property type="protein sequence ID" value="AAB38575.1"/>
    <property type="molecule type" value="Genomic_DNA"/>
</dbReference>
<dbReference type="EMBL" id="U51357">
    <property type="protein sequence ID" value="AAB38588.1"/>
    <property type="molecule type" value="Genomic_DNA"/>
</dbReference>
<dbReference type="EMBL" id="U51370">
    <property type="protein sequence ID" value="AAB38593.1"/>
    <property type="molecule type" value="Genomic_DNA"/>
</dbReference>
<dbReference type="PIR" id="A53193">
    <property type="entry name" value="A53193"/>
</dbReference>
<dbReference type="RefSeq" id="NP_571138.1">
    <property type="nucleotide sequence ID" value="NM_131063.3"/>
</dbReference>
<dbReference type="SMR" id="Q92008"/>
<dbReference type="FunCoup" id="Q92008">
    <property type="interactions" value="832"/>
</dbReference>
<dbReference type="STRING" id="7955.ENSDARP00000125090"/>
<dbReference type="MEROPS" id="C46.005"/>
<dbReference type="PaxDb" id="7955-ENSDARP00000125090"/>
<dbReference type="Ensembl" id="ENSDART00000149395">
    <property type="protein sequence ID" value="ENSDARP00000125090"/>
    <property type="gene ID" value="ENSDARG00000068567"/>
</dbReference>
<dbReference type="Ensembl" id="ENSDART00000189635">
    <property type="protein sequence ID" value="ENSDARP00000145101"/>
    <property type="gene ID" value="ENSDARG00000111447"/>
</dbReference>
<dbReference type="GeneID" id="30269"/>
<dbReference type="KEGG" id="dre:30269"/>
<dbReference type="AGR" id="ZFIN:ZDB-GENE-980526-166"/>
<dbReference type="CTD" id="30269"/>
<dbReference type="ZFIN" id="ZDB-GENE-980526-166">
    <property type="gene designation" value="shha"/>
</dbReference>
<dbReference type="eggNOG" id="KOG3638">
    <property type="taxonomic scope" value="Eukaryota"/>
</dbReference>
<dbReference type="HOGENOM" id="CLU_034686_0_0_1"/>
<dbReference type="InParanoid" id="Q92008"/>
<dbReference type="OMA" id="HWVSSLL"/>
<dbReference type="OrthoDB" id="5212at2759"/>
<dbReference type="PhylomeDB" id="Q92008"/>
<dbReference type="TreeFam" id="TF106458"/>
<dbReference type="Reactome" id="R-DRE-5358346">
    <property type="pathway name" value="Hedgehog ligand biogenesis"/>
</dbReference>
<dbReference type="Reactome" id="R-DRE-5362798">
    <property type="pathway name" value="Release of Hh-Np from the secreting cell"/>
</dbReference>
<dbReference type="Reactome" id="R-DRE-5632681">
    <property type="pathway name" value="Ligand-receptor interactions"/>
</dbReference>
<dbReference type="SignaLink" id="Q92008"/>
<dbReference type="PRO" id="PR:Q92008"/>
<dbReference type="Proteomes" id="UP000000437">
    <property type="component" value="Alternate scaffold 7"/>
</dbReference>
<dbReference type="Proteomes" id="UP000000437">
    <property type="component" value="Chromosome 7"/>
</dbReference>
<dbReference type="Bgee" id="ENSDARG00000068567">
    <property type="expression patterns" value="Expressed in tail bud paraxial mesoderm and 13 other cell types or tissues"/>
</dbReference>
<dbReference type="ExpressionAtlas" id="Q92008">
    <property type="expression patterns" value="baseline and differential"/>
</dbReference>
<dbReference type="GO" id="GO:0005783">
    <property type="term" value="C:endoplasmic reticulum"/>
    <property type="evidence" value="ECO:0000250"/>
    <property type="project" value="UniProtKB"/>
</dbReference>
<dbReference type="GO" id="GO:0005789">
    <property type="term" value="C:endoplasmic reticulum membrane"/>
    <property type="evidence" value="ECO:0007669"/>
    <property type="project" value="UniProtKB-SubCell"/>
</dbReference>
<dbReference type="GO" id="GO:0005615">
    <property type="term" value="C:extracellular space"/>
    <property type="evidence" value="ECO:0000318"/>
    <property type="project" value="GO_Central"/>
</dbReference>
<dbReference type="GO" id="GO:0005794">
    <property type="term" value="C:Golgi apparatus"/>
    <property type="evidence" value="ECO:0000250"/>
    <property type="project" value="UniProtKB"/>
</dbReference>
<dbReference type="GO" id="GO:0000139">
    <property type="term" value="C:Golgi membrane"/>
    <property type="evidence" value="ECO:0007669"/>
    <property type="project" value="UniProtKB-SubCell"/>
</dbReference>
<dbReference type="GO" id="GO:0005886">
    <property type="term" value="C:plasma membrane"/>
    <property type="evidence" value="ECO:0007669"/>
    <property type="project" value="UniProtKB-SubCell"/>
</dbReference>
<dbReference type="GO" id="GO:0005509">
    <property type="term" value="F:calcium ion binding"/>
    <property type="evidence" value="ECO:0000318"/>
    <property type="project" value="GO_Central"/>
</dbReference>
<dbReference type="GO" id="GO:0140853">
    <property type="term" value="F:cholesterol-protein transferase activity"/>
    <property type="evidence" value="ECO:0000250"/>
    <property type="project" value="UniProtKB"/>
</dbReference>
<dbReference type="GO" id="GO:0005113">
    <property type="term" value="F:patched binding"/>
    <property type="evidence" value="ECO:0000318"/>
    <property type="project" value="GO_Central"/>
</dbReference>
<dbReference type="GO" id="GO:0008233">
    <property type="term" value="F:peptidase activity"/>
    <property type="evidence" value="ECO:0000250"/>
    <property type="project" value="UniProtKB"/>
</dbReference>
<dbReference type="GO" id="GO:0021984">
    <property type="term" value="P:adenohypophysis development"/>
    <property type="evidence" value="ECO:0000314"/>
    <property type="project" value="ZFIN"/>
</dbReference>
<dbReference type="GO" id="GO:0009952">
    <property type="term" value="P:anterior/posterior pattern specification"/>
    <property type="evidence" value="ECO:0000315"/>
    <property type="project" value="ZFIN"/>
</dbReference>
<dbReference type="GO" id="GO:0007411">
    <property type="term" value="P:axon guidance"/>
    <property type="evidence" value="ECO:0000315"/>
    <property type="project" value="ZFIN"/>
</dbReference>
<dbReference type="GO" id="GO:0008015">
    <property type="term" value="P:blood circulation"/>
    <property type="evidence" value="ECO:0000315"/>
    <property type="project" value="ZFIN"/>
</dbReference>
<dbReference type="GO" id="GO:0007420">
    <property type="term" value="P:brain development"/>
    <property type="evidence" value="ECO:0000315"/>
    <property type="project" value="ZFIN"/>
</dbReference>
<dbReference type="GO" id="GO:0043010">
    <property type="term" value="P:camera-type eye development"/>
    <property type="evidence" value="ECO:0000314"/>
    <property type="project" value="ZFIN"/>
</dbReference>
<dbReference type="GO" id="GO:0010002">
    <property type="term" value="P:cardioblast differentiation"/>
    <property type="evidence" value="ECO:0000315"/>
    <property type="project" value="ZFIN"/>
</dbReference>
<dbReference type="GO" id="GO:0035143">
    <property type="term" value="P:caudal fin morphogenesis"/>
    <property type="evidence" value="ECO:0000315"/>
    <property type="project" value="ZFIN"/>
</dbReference>
<dbReference type="GO" id="GO:0001708">
    <property type="term" value="P:cell fate specification"/>
    <property type="evidence" value="ECO:0000315"/>
    <property type="project" value="ZFIN"/>
</dbReference>
<dbReference type="GO" id="GO:0007267">
    <property type="term" value="P:cell-cell signaling"/>
    <property type="evidence" value="ECO:0007669"/>
    <property type="project" value="InterPro"/>
</dbReference>
<dbReference type="GO" id="GO:0007417">
    <property type="term" value="P:central nervous system development"/>
    <property type="evidence" value="ECO:0000315"/>
    <property type="project" value="ZFIN"/>
</dbReference>
<dbReference type="GO" id="GO:0007368">
    <property type="term" value="P:determination of left/right symmetry"/>
    <property type="evidence" value="ECO:0000314"/>
    <property type="project" value="ZFIN"/>
</dbReference>
<dbReference type="GO" id="GO:0021536">
    <property type="term" value="P:diencephalon development"/>
    <property type="evidence" value="ECO:0000316"/>
    <property type="project" value="ZFIN"/>
</dbReference>
<dbReference type="GO" id="GO:0009953">
    <property type="term" value="P:dorsal/ventral pattern formation"/>
    <property type="evidence" value="ECO:0000315"/>
    <property type="project" value="ZFIN"/>
</dbReference>
<dbReference type="GO" id="GO:0031076">
    <property type="term" value="P:embryonic camera-type eye development"/>
    <property type="evidence" value="ECO:0000315"/>
    <property type="project" value="ZFIN"/>
</dbReference>
<dbReference type="GO" id="GO:0048557">
    <property type="term" value="P:embryonic digestive tract morphogenesis"/>
    <property type="evidence" value="ECO:0000315"/>
    <property type="project" value="ZFIN"/>
</dbReference>
<dbReference type="GO" id="GO:0048702">
    <property type="term" value="P:embryonic neurocranium morphogenesis"/>
    <property type="evidence" value="ECO:0000315"/>
    <property type="project" value="ZFIN"/>
</dbReference>
<dbReference type="GO" id="GO:0048703">
    <property type="term" value="P:embryonic viscerocranium morphogenesis"/>
    <property type="evidence" value="ECO:0000315"/>
    <property type="project" value="ZFIN"/>
</dbReference>
<dbReference type="GO" id="GO:0060956">
    <property type="term" value="P:endocardial cell differentiation"/>
    <property type="evidence" value="ECO:0000316"/>
    <property type="project" value="ZFIN"/>
</dbReference>
<dbReference type="GO" id="GO:0031018">
    <property type="term" value="P:endocrine pancreas development"/>
    <property type="evidence" value="ECO:0000314"/>
    <property type="project" value="ZFIN"/>
</dbReference>
<dbReference type="GO" id="GO:0042462">
    <property type="term" value="P:eye photoreceptor cell development"/>
    <property type="evidence" value="ECO:0000315"/>
    <property type="project" value="ZFIN"/>
</dbReference>
<dbReference type="GO" id="GO:0033504">
    <property type="term" value="P:floor plate development"/>
    <property type="evidence" value="ECO:0000315"/>
    <property type="project" value="ZFIN"/>
</dbReference>
<dbReference type="GO" id="GO:0021508">
    <property type="term" value="P:floor plate formation"/>
    <property type="evidence" value="ECO:0000315"/>
    <property type="project" value="ZFIN"/>
</dbReference>
<dbReference type="GO" id="GO:0030900">
    <property type="term" value="P:forebrain development"/>
    <property type="evidence" value="ECO:0000315"/>
    <property type="project" value="ZFIN"/>
</dbReference>
<dbReference type="GO" id="GO:0010001">
    <property type="term" value="P:glial cell differentiation"/>
    <property type="evidence" value="ECO:0000315"/>
    <property type="project" value="ZFIN"/>
</dbReference>
<dbReference type="GO" id="GO:0042063">
    <property type="term" value="P:gliogenesis"/>
    <property type="evidence" value="ECO:0000315"/>
    <property type="project" value="ZFIN"/>
</dbReference>
<dbReference type="GO" id="GO:0032835">
    <property type="term" value="P:glomerulus development"/>
    <property type="evidence" value="ECO:0000315"/>
    <property type="project" value="ZFIN"/>
</dbReference>
<dbReference type="GO" id="GO:0021986">
    <property type="term" value="P:habenula development"/>
    <property type="evidence" value="ECO:0000315"/>
    <property type="project" value="ZFIN"/>
</dbReference>
<dbReference type="GO" id="GO:0007507">
    <property type="term" value="P:heart development"/>
    <property type="evidence" value="ECO:0000315"/>
    <property type="project" value="ZFIN"/>
</dbReference>
<dbReference type="GO" id="GO:0001947">
    <property type="term" value="P:heart looping"/>
    <property type="evidence" value="ECO:0000314"/>
    <property type="project" value="ZFIN"/>
</dbReference>
<dbReference type="GO" id="GO:0030902">
    <property type="term" value="P:hindbrain development"/>
    <property type="evidence" value="ECO:0000315"/>
    <property type="project" value="ZFIN"/>
</dbReference>
<dbReference type="GO" id="GO:0048839">
    <property type="term" value="P:inner ear development"/>
    <property type="evidence" value="ECO:0000316"/>
    <property type="project" value="ZFIN"/>
</dbReference>
<dbReference type="GO" id="GO:0016539">
    <property type="term" value="P:intein-mediated protein splicing"/>
    <property type="evidence" value="ECO:0007669"/>
    <property type="project" value="InterPro"/>
</dbReference>
<dbReference type="GO" id="GO:0030917">
    <property type="term" value="P:midbrain-hindbrain boundary development"/>
    <property type="evidence" value="ECO:0000315"/>
    <property type="project" value="ZFIN"/>
</dbReference>
<dbReference type="GO" id="GO:0042694">
    <property type="term" value="P:muscle cell fate specification"/>
    <property type="evidence" value="ECO:0000315"/>
    <property type="project" value="ZFIN"/>
</dbReference>
<dbReference type="GO" id="GO:0007517">
    <property type="term" value="P:muscle organ development"/>
    <property type="evidence" value="ECO:0000315"/>
    <property type="project" value="ZFIN"/>
</dbReference>
<dbReference type="GO" id="GO:0008285">
    <property type="term" value="P:negative regulation of cell population proliferation"/>
    <property type="evidence" value="ECO:0000315"/>
    <property type="project" value="ZFIN"/>
</dbReference>
<dbReference type="GO" id="GO:0007399">
    <property type="term" value="P:nervous system development"/>
    <property type="evidence" value="ECO:0000315"/>
    <property type="project" value="ZFIN"/>
</dbReference>
<dbReference type="GO" id="GO:0001839">
    <property type="term" value="P:neural plate morphogenesis"/>
    <property type="evidence" value="ECO:0000315"/>
    <property type="project" value="ZFIN"/>
</dbReference>
<dbReference type="GO" id="GO:0030182">
    <property type="term" value="P:neuron differentiation"/>
    <property type="evidence" value="ECO:0000315"/>
    <property type="project" value="ZFIN"/>
</dbReference>
<dbReference type="GO" id="GO:0048663">
    <property type="term" value="P:neuron fate commitment"/>
    <property type="evidence" value="ECO:0000316"/>
    <property type="project" value="ZFIN"/>
</dbReference>
<dbReference type="GO" id="GO:0042476">
    <property type="term" value="P:odontogenesis"/>
    <property type="evidence" value="ECO:0000315"/>
    <property type="project" value="ZFIN"/>
</dbReference>
<dbReference type="GO" id="GO:0048709">
    <property type="term" value="P:oligodendrocyte differentiation"/>
    <property type="evidence" value="ECO:0000315"/>
    <property type="project" value="ZFIN"/>
</dbReference>
<dbReference type="GO" id="GO:0070444">
    <property type="term" value="P:oligodendrocyte progenitor proliferation"/>
    <property type="evidence" value="ECO:0000315"/>
    <property type="project" value="ZFIN"/>
</dbReference>
<dbReference type="GO" id="GO:0031016">
    <property type="term" value="P:pancreas development"/>
    <property type="evidence" value="ECO:0000314"/>
    <property type="project" value="ZFIN"/>
</dbReference>
<dbReference type="GO" id="GO:0033339">
    <property type="term" value="P:pectoral fin development"/>
    <property type="evidence" value="ECO:0000315"/>
    <property type="project" value="ZFIN"/>
</dbReference>
<dbReference type="GO" id="GO:0045494">
    <property type="term" value="P:photoreceptor cell maintenance"/>
    <property type="evidence" value="ECO:0000315"/>
    <property type="project" value="ZFIN"/>
</dbReference>
<dbReference type="GO" id="GO:0045880">
    <property type="term" value="P:positive regulation of smoothened signaling pathway"/>
    <property type="evidence" value="ECO:0000250"/>
    <property type="project" value="UniProtKB"/>
</dbReference>
<dbReference type="GO" id="GO:0048618">
    <property type="term" value="P:post-embryonic foregut morphogenesis"/>
    <property type="evidence" value="ECO:0000315"/>
    <property type="project" value="ZFIN"/>
</dbReference>
<dbReference type="GO" id="GO:0048793">
    <property type="term" value="P:pronephros development"/>
    <property type="evidence" value="ECO:0000315"/>
    <property type="project" value="ZFIN"/>
</dbReference>
<dbReference type="GO" id="GO:0016540">
    <property type="term" value="P:protein autoprocessing"/>
    <property type="evidence" value="ECO:0007669"/>
    <property type="project" value="InterPro"/>
</dbReference>
<dbReference type="GO" id="GO:0030510">
    <property type="term" value="P:regulation of BMP signaling pathway"/>
    <property type="evidence" value="ECO:0000314"/>
    <property type="project" value="ZFIN"/>
</dbReference>
<dbReference type="GO" id="GO:1905178">
    <property type="term" value="P:regulation of cardiac muscle tissue regeneration"/>
    <property type="evidence" value="ECO:0000315"/>
    <property type="project" value="ZFIN"/>
</dbReference>
<dbReference type="GO" id="GO:0061035">
    <property type="term" value="P:regulation of cartilage development"/>
    <property type="evidence" value="ECO:0000316"/>
    <property type="project" value="ZFIN"/>
</dbReference>
<dbReference type="GO" id="GO:0010468">
    <property type="term" value="P:regulation of gene expression"/>
    <property type="evidence" value="ECO:0000314"/>
    <property type="project" value="MGI"/>
</dbReference>
<dbReference type="GO" id="GO:0030947">
    <property type="term" value="P:regulation of vascular endothelial growth factor receptor signaling pathway"/>
    <property type="evidence" value="ECO:0000315"/>
    <property type="project" value="ZFIN"/>
</dbReference>
<dbReference type="GO" id="GO:0097264">
    <property type="term" value="P:self proteolysis"/>
    <property type="evidence" value="ECO:0000250"/>
    <property type="project" value="UniProtKB"/>
</dbReference>
<dbReference type="GO" id="GO:0048741">
    <property type="term" value="P:skeletal muscle fiber development"/>
    <property type="evidence" value="ECO:0000314"/>
    <property type="project" value="ZFIN"/>
</dbReference>
<dbReference type="GO" id="GO:0007224">
    <property type="term" value="P:smoothened signaling pathway"/>
    <property type="evidence" value="ECO:0000316"/>
    <property type="project" value="ZFIN"/>
</dbReference>
<dbReference type="GO" id="GO:0001756">
    <property type="term" value="P:somitogenesis"/>
    <property type="evidence" value="ECO:0000315"/>
    <property type="project" value="ZFIN"/>
</dbReference>
<dbReference type="GO" id="GO:0021520">
    <property type="term" value="P:spinal cord motor neuron cell fate specification"/>
    <property type="evidence" value="ECO:0000315"/>
    <property type="project" value="ZFIN"/>
</dbReference>
<dbReference type="GO" id="GO:0055002">
    <property type="term" value="P:striated muscle cell development"/>
    <property type="evidence" value="ECO:0000315"/>
    <property type="project" value="ZFIN"/>
</dbReference>
<dbReference type="GO" id="GO:0048795">
    <property type="term" value="P:swim bladder morphogenesis"/>
    <property type="evidence" value="ECO:0000315"/>
    <property type="project" value="ZFIN"/>
</dbReference>
<dbReference type="CDD" id="cd00081">
    <property type="entry name" value="Hint"/>
    <property type="match status" value="1"/>
</dbReference>
<dbReference type="FunFam" id="2.170.16.10:FF:000001">
    <property type="entry name" value="Indian hedgehog"/>
    <property type="match status" value="1"/>
</dbReference>
<dbReference type="FunFam" id="3.30.1380.10:FF:000001">
    <property type="entry name" value="Indian hedgehog"/>
    <property type="match status" value="1"/>
</dbReference>
<dbReference type="Gene3D" id="3.30.1380.10">
    <property type="match status" value="1"/>
</dbReference>
<dbReference type="Gene3D" id="2.170.16.10">
    <property type="entry name" value="Hedgehog/Intein (Hint) domain"/>
    <property type="match status" value="1"/>
</dbReference>
<dbReference type="InterPro" id="IPR001657">
    <property type="entry name" value="Hedgehog"/>
</dbReference>
<dbReference type="InterPro" id="IPR001767">
    <property type="entry name" value="Hedgehog_Hint"/>
</dbReference>
<dbReference type="InterPro" id="IPR009045">
    <property type="entry name" value="Hedgehog_sig/DD-Pept_Zn-bd_sf"/>
</dbReference>
<dbReference type="InterPro" id="IPR050387">
    <property type="entry name" value="Hedgehog_Signaling"/>
</dbReference>
<dbReference type="InterPro" id="IPR000320">
    <property type="entry name" value="Hedgehog_signalling_dom"/>
</dbReference>
<dbReference type="InterPro" id="IPR003586">
    <property type="entry name" value="Hint_dom_C"/>
</dbReference>
<dbReference type="InterPro" id="IPR003587">
    <property type="entry name" value="Hint_dom_N"/>
</dbReference>
<dbReference type="InterPro" id="IPR036844">
    <property type="entry name" value="Hint_dom_sf"/>
</dbReference>
<dbReference type="InterPro" id="IPR006141">
    <property type="entry name" value="Intein_N"/>
</dbReference>
<dbReference type="PANTHER" id="PTHR11889">
    <property type="entry name" value="HEDGEHOG"/>
    <property type="match status" value="1"/>
</dbReference>
<dbReference type="PANTHER" id="PTHR11889:SF36">
    <property type="entry name" value="SONIC HEDGEHOG PROTEIN"/>
    <property type="match status" value="1"/>
</dbReference>
<dbReference type="Pfam" id="PF01085">
    <property type="entry name" value="HH_signal"/>
    <property type="match status" value="1"/>
</dbReference>
<dbReference type="Pfam" id="PF01079">
    <property type="entry name" value="Hint"/>
    <property type="match status" value="1"/>
</dbReference>
<dbReference type="PIRSF" id="PIRSF009400">
    <property type="entry name" value="Peptidase_C46"/>
    <property type="match status" value="1"/>
</dbReference>
<dbReference type="PRINTS" id="PR00632">
    <property type="entry name" value="SONICHHOG"/>
</dbReference>
<dbReference type="SMART" id="SM00305">
    <property type="entry name" value="HintC"/>
    <property type="match status" value="1"/>
</dbReference>
<dbReference type="SMART" id="SM00306">
    <property type="entry name" value="HintN"/>
    <property type="match status" value="1"/>
</dbReference>
<dbReference type="SUPFAM" id="SSF55166">
    <property type="entry name" value="Hedgehog/DD-peptidase"/>
    <property type="match status" value="1"/>
</dbReference>
<dbReference type="SUPFAM" id="SSF51294">
    <property type="entry name" value="Hedgehog/intein (Hint) domain"/>
    <property type="match status" value="1"/>
</dbReference>
<dbReference type="PROSITE" id="PS50817">
    <property type="entry name" value="INTEIN_N_TER"/>
    <property type="match status" value="1"/>
</dbReference>
<reference key="1">
    <citation type="journal article" date="1994" name="Cell">
        <title>Floor plate and motor neuron induction by vhh-1, a vertebrate homolog of hedgehog expressed by the notochord.</title>
        <authorList>
            <person name="Roelink H."/>
            <person name="Augsburger A."/>
            <person name="Heemskerk J."/>
            <person name="Korzh V."/>
            <person name="Norlin S."/>
            <person name="Ruiz i Altaba A."/>
            <person name="Tanabe Y."/>
            <person name="Placzek M."/>
            <person name="Edlund T."/>
            <person name="Jessell T.M."/>
            <person name="Dodd J."/>
        </authorList>
    </citation>
    <scope>NUCLEOTIDE SEQUENCE [MRNA]</scope>
    <source>
        <tissue>Embryo</tissue>
    </source>
</reference>
<reference key="2">
    <citation type="journal article" date="1995" name="Curr. Biol.">
        <title>Patterning activities of vertebrate hedgehog proteins in the developing eye and brain.</title>
        <authorList>
            <person name="Ekker S.C."/>
            <person name="Ungar A.R."/>
            <person name="Greenstein P."/>
            <person name="von Kessler D.P."/>
            <person name="Porter J.A."/>
            <person name="Moon R.T."/>
            <person name="Beachy P.A."/>
        </authorList>
    </citation>
    <scope>NUCLEOTIDE SEQUENCE [MRNA]</scope>
    <scope>PROTEOLYTIC PROCESSING</scope>
    <scope>AUTOCATALYTIC CLEAVAGE</scope>
</reference>
<reference key="3">
    <citation type="journal article" date="1994" name="Development Suppl.">
        <title>The hedgehog gene family in Drosophila and vertebrate development.</title>
        <authorList>
            <person name="Fietz M.J."/>
            <person name="Concordet J.-P."/>
            <person name="Barbosa R."/>
            <person name="Johnson R."/>
            <person name="Krauss S."/>
            <person name="McMahon A.P."/>
            <person name="Tabin C."/>
            <person name="Ingham P.W."/>
        </authorList>
    </citation>
    <scope>NUCLEOTIDE SEQUENCE [MRNA]</scope>
</reference>
<reference key="4">
    <citation type="journal article" date="1999" name="Development">
        <title>Intronic enhancers control expression of zebrafish sonic hedgehog in floor plate and notochord.</title>
        <authorList>
            <person name="Muller F."/>
            <person name="Chang B."/>
            <person name="Albert S."/>
            <person name="Fischer N."/>
            <person name="Tora L."/>
            <person name="Strahle U."/>
        </authorList>
    </citation>
    <scope>NUCLEOTIDE SEQUENCE [GENOMIC DNA]</scope>
</reference>
<reference key="5">
    <citation type="journal article" date="1996" name="Proc. Natl. Acad. Sci. U.S.A.">
        <title>Evolutionary analyses of hedgehog and Hoxd-10 genes in fish species closely related to the zebrafish.</title>
        <authorList>
            <person name="Zardoya R."/>
            <person name="Abouheif E."/>
            <person name="Meyer A."/>
        </authorList>
    </citation>
    <scope>NUCLEOTIDE SEQUENCE [GENOMIC DNA] OF 30-92 AND 113-170</scope>
    <source>
        <tissue>Muscle</tissue>
    </source>
</reference>
<accession>Q92008</accession>
<accession>O13170</accession>
<accession>O13171</accession>
<accession>O13208</accession>
<accession>O13209</accession>
<accession>O13245</accession>
<accession>O13246</accession>